<reference key="1">
    <citation type="journal article" date="2001" name="Proc. Natl. Acad. Sci. U.S.A.">
        <title>Complete genomic sequence of Pasteurella multocida Pm70.</title>
        <authorList>
            <person name="May B.J."/>
            <person name="Zhang Q."/>
            <person name="Li L.L."/>
            <person name="Paustian M.L."/>
            <person name="Whittam T.S."/>
            <person name="Kapur V."/>
        </authorList>
    </citation>
    <scope>NUCLEOTIDE SEQUENCE [LARGE SCALE GENOMIC DNA]</scope>
    <source>
        <strain>Pm70</strain>
    </source>
</reference>
<feature type="chain" id="PRO_0000261075" description="Ribose import ATP-binding protein RbsA 1">
    <location>
        <begin position="1"/>
        <end position="498"/>
    </location>
</feature>
<feature type="domain" description="ABC transporter 1" evidence="1">
    <location>
        <begin position="7"/>
        <end position="243"/>
    </location>
</feature>
<feature type="domain" description="ABC transporter 2" evidence="1">
    <location>
        <begin position="254"/>
        <end position="496"/>
    </location>
</feature>
<feature type="binding site" evidence="1">
    <location>
        <begin position="39"/>
        <end position="46"/>
    </location>
    <ligand>
        <name>ATP</name>
        <dbReference type="ChEBI" id="CHEBI:30616"/>
    </ligand>
</feature>
<sequence>MQHETLLHIQGIDKSFPGVKALSNACLSVYAGRAMALMGENGAGKSTLMKVLTGIYSKDAGTIEYLGKQVTFKGPKESQEAGISIIHQELNLVGNLTIAENIFLGREFVTPWGSIDWKKMHQEADKLLKRLGVSHSSHQLCSELSIGEQQMVEIAKALSFESKVIIMDEPTDALTDTETAALFKVIRELKAEKRGIVYISHRIKEIFEICDDVTVLRDGEFIGEKAVNVLDEDQLIEMMVGRRLDEQYPHLDKPRGELLLEVENLSGSGVHDVSFTLHRGEILGVSGLMGAGRTELMKVLYGALPRSSGKVRLAQQEIHNTCPQDGLNHGIVYISEDRKGDGLILGMSVKENMSLTALAYFSKSIQIDHKAEQLAVGDFITMFNIKTPSQEQQIGLLSGGNQQKVAIAKGLMTRPNVLILDEPTRGVDVGAKKEIYQLINEFKKEGLSIILVSSEMPEVLGMSDRILVMHEGRISAEFQRGEATQEKLLAAAIGKSAL</sequence>
<dbReference type="EC" id="7.5.2.7" evidence="1"/>
<dbReference type="EMBL" id="AE004439">
    <property type="protein sequence ID" value="AAK02239.1"/>
    <property type="molecule type" value="Genomic_DNA"/>
</dbReference>
<dbReference type="SMR" id="Q9CP98"/>
<dbReference type="STRING" id="272843.PM0155"/>
<dbReference type="EnsemblBacteria" id="AAK02239">
    <property type="protein sequence ID" value="AAK02239"/>
    <property type="gene ID" value="PM0155"/>
</dbReference>
<dbReference type="KEGG" id="pmu:PM0155"/>
<dbReference type="HOGENOM" id="CLU_000604_92_3_6"/>
<dbReference type="OrthoDB" id="9776369at2"/>
<dbReference type="Proteomes" id="UP000000809">
    <property type="component" value="Chromosome"/>
</dbReference>
<dbReference type="GO" id="GO:0005886">
    <property type="term" value="C:plasma membrane"/>
    <property type="evidence" value="ECO:0007669"/>
    <property type="project" value="UniProtKB-SubCell"/>
</dbReference>
<dbReference type="GO" id="GO:0015611">
    <property type="term" value="F:ABC-type D-ribose transporter activity"/>
    <property type="evidence" value="ECO:0007669"/>
    <property type="project" value="UniProtKB-EC"/>
</dbReference>
<dbReference type="GO" id="GO:0005524">
    <property type="term" value="F:ATP binding"/>
    <property type="evidence" value="ECO:0007669"/>
    <property type="project" value="UniProtKB-KW"/>
</dbReference>
<dbReference type="GO" id="GO:0016887">
    <property type="term" value="F:ATP hydrolysis activity"/>
    <property type="evidence" value="ECO:0007669"/>
    <property type="project" value="InterPro"/>
</dbReference>
<dbReference type="CDD" id="cd03216">
    <property type="entry name" value="ABC_Carb_Monos_I"/>
    <property type="match status" value="1"/>
</dbReference>
<dbReference type="CDD" id="cd03215">
    <property type="entry name" value="ABC_Carb_Monos_II"/>
    <property type="match status" value="1"/>
</dbReference>
<dbReference type="FunFam" id="3.40.50.300:FF:000126">
    <property type="entry name" value="Galactose/methyl galactoside import ATP-binding protein MglA"/>
    <property type="match status" value="1"/>
</dbReference>
<dbReference type="FunFam" id="3.40.50.300:FF:000127">
    <property type="entry name" value="Ribose import ATP-binding protein RbsA"/>
    <property type="match status" value="1"/>
</dbReference>
<dbReference type="Gene3D" id="3.40.50.300">
    <property type="entry name" value="P-loop containing nucleotide triphosphate hydrolases"/>
    <property type="match status" value="2"/>
</dbReference>
<dbReference type="InterPro" id="IPR003593">
    <property type="entry name" value="AAA+_ATPase"/>
</dbReference>
<dbReference type="InterPro" id="IPR050107">
    <property type="entry name" value="ABC_carbohydrate_import_ATPase"/>
</dbReference>
<dbReference type="InterPro" id="IPR003439">
    <property type="entry name" value="ABC_transporter-like_ATP-bd"/>
</dbReference>
<dbReference type="InterPro" id="IPR017871">
    <property type="entry name" value="ABC_transporter-like_CS"/>
</dbReference>
<dbReference type="InterPro" id="IPR027417">
    <property type="entry name" value="P-loop_NTPase"/>
</dbReference>
<dbReference type="NCBIfam" id="NF008030">
    <property type="entry name" value="PRK10762.1"/>
    <property type="match status" value="1"/>
</dbReference>
<dbReference type="PANTHER" id="PTHR43790">
    <property type="entry name" value="CARBOHYDRATE TRANSPORT ATP-BINDING PROTEIN MG119-RELATED"/>
    <property type="match status" value="1"/>
</dbReference>
<dbReference type="PANTHER" id="PTHR43790:SF3">
    <property type="entry name" value="D-ALLOSE IMPORT ATP-BINDING PROTEIN ALSA-RELATED"/>
    <property type="match status" value="1"/>
</dbReference>
<dbReference type="Pfam" id="PF00005">
    <property type="entry name" value="ABC_tran"/>
    <property type="match status" value="2"/>
</dbReference>
<dbReference type="SMART" id="SM00382">
    <property type="entry name" value="AAA"/>
    <property type="match status" value="2"/>
</dbReference>
<dbReference type="SUPFAM" id="SSF52540">
    <property type="entry name" value="P-loop containing nucleoside triphosphate hydrolases"/>
    <property type="match status" value="2"/>
</dbReference>
<dbReference type="PROSITE" id="PS00211">
    <property type="entry name" value="ABC_TRANSPORTER_1"/>
    <property type="match status" value="1"/>
</dbReference>
<dbReference type="PROSITE" id="PS50893">
    <property type="entry name" value="ABC_TRANSPORTER_2"/>
    <property type="match status" value="2"/>
</dbReference>
<dbReference type="PROSITE" id="PS51254">
    <property type="entry name" value="RBSA"/>
    <property type="match status" value="1"/>
</dbReference>
<organism>
    <name type="scientific">Pasteurella multocida (strain Pm70)</name>
    <dbReference type="NCBI Taxonomy" id="272843"/>
    <lineage>
        <taxon>Bacteria</taxon>
        <taxon>Pseudomonadati</taxon>
        <taxon>Pseudomonadota</taxon>
        <taxon>Gammaproteobacteria</taxon>
        <taxon>Pasteurellales</taxon>
        <taxon>Pasteurellaceae</taxon>
        <taxon>Pasteurella</taxon>
    </lineage>
</organism>
<accession>Q9CP98</accession>
<proteinExistence type="inferred from homology"/>
<comment type="function">
    <text evidence="1">Part of the ABC transporter complex RbsABC involved in ribose import. Responsible for energy coupling to the transport system.</text>
</comment>
<comment type="catalytic activity">
    <reaction evidence="1">
        <text>D-ribose(out) + ATP + H2O = D-ribose(in) + ADP + phosphate + H(+)</text>
        <dbReference type="Rhea" id="RHEA:29903"/>
        <dbReference type="ChEBI" id="CHEBI:15377"/>
        <dbReference type="ChEBI" id="CHEBI:15378"/>
        <dbReference type="ChEBI" id="CHEBI:30616"/>
        <dbReference type="ChEBI" id="CHEBI:43474"/>
        <dbReference type="ChEBI" id="CHEBI:47013"/>
        <dbReference type="ChEBI" id="CHEBI:456216"/>
        <dbReference type="EC" id="7.5.2.7"/>
    </reaction>
</comment>
<comment type="subunit">
    <text evidence="1">The complex is composed of an ATP-binding protein (RbsA), two transmembrane proteins (RbsC) and a solute-binding protein (RbsB).</text>
</comment>
<comment type="subcellular location">
    <subcellularLocation>
        <location evidence="1">Cell inner membrane</location>
        <topology evidence="1">Peripheral membrane protein</topology>
    </subcellularLocation>
</comment>
<comment type="similarity">
    <text evidence="1">Belongs to the ABC transporter superfamily. Ribose importer (TC 3.A.1.2.1) family.</text>
</comment>
<gene>
    <name evidence="1" type="primary">rbsA1</name>
    <name type="ordered locus">PM0155</name>
</gene>
<evidence type="ECO:0000255" key="1">
    <source>
        <dbReference type="HAMAP-Rule" id="MF_01716"/>
    </source>
</evidence>
<keyword id="KW-0067">ATP-binding</keyword>
<keyword id="KW-0997">Cell inner membrane</keyword>
<keyword id="KW-1003">Cell membrane</keyword>
<keyword id="KW-0472">Membrane</keyword>
<keyword id="KW-0547">Nucleotide-binding</keyword>
<keyword id="KW-1185">Reference proteome</keyword>
<keyword id="KW-0677">Repeat</keyword>
<keyword id="KW-0762">Sugar transport</keyword>
<keyword id="KW-1278">Translocase</keyword>
<keyword id="KW-0813">Transport</keyword>
<protein>
    <recommendedName>
        <fullName evidence="1">Ribose import ATP-binding protein RbsA 1</fullName>
        <ecNumber evidence="1">7.5.2.7</ecNumber>
    </recommendedName>
</protein>
<name>RBSA1_PASMU</name>